<comment type="function">
    <text evidence="1">Sperm surface membrane protein that may be involved in sperm-egg plasma membrane adhesion and fusion during fertilization. Could have a direct role in sperm-zona binding or migration of sperm from the uterus into the oviduct. Interactions with egg membrane could be mediated via binding between its disintegrin-like domain to one or more integrins receptors on the egg. This is a non catalytic metalloprotease-like protein (By similarity).</text>
</comment>
<comment type="subunit">
    <text>Heterodimer with ADAM1/fertilin subunit alpha.</text>
</comment>
<comment type="subcellular location">
    <subcellularLocation>
        <location>Membrane</location>
        <topology>Single-pass type I membrane protein</topology>
    </subcellularLocation>
</comment>
<comment type="tissue specificity">
    <text>Expressed specifically in testis.</text>
</comment>
<comment type="developmental stage">
    <text>Expression begins during meiotic prophase.</text>
</comment>
<comment type="domain">
    <text evidence="1">A tripeptide motif (TDE) within disintegrin-like domain could be involved in the binding to egg integrin receptor and thus could mediate sperm/egg binding.</text>
</comment>
<comment type="PTM">
    <text evidence="1">The signal and the metalloprotease domain are cleaved during the epididymal maturation of the spermatozoa.</text>
</comment>
<keyword id="KW-0130">Cell adhesion</keyword>
<keyword id="KW-1015">Disulfide bond</keyword>
<keyword id="KW-0245">EGF-like domain</keyword>
<keyword id="KW-0325">Glycoprotein</keyword>
<keyword id="KW-0472">Membrane</keyword>
<keyword id="KW-0597">Phosphoprotein</keyword>
<keyword id="KW-1185">Reference proteome</keyword>
<keyword id="KW-0732">Signal</keyword>
<keyword id="KW-0812">Transmembrane</keyword>
<keyword id="KW-1133">Transmembrane helix</keyword>
<accession>Q60411</accession>
<gene>
    <name type="primary">ADAM2</name>
    <name type="synonym">FTNB</name>
</gene>
<feature type="signal peptide" evidence="3">
    <location>
        <begin position="1"/>
        <end position="15"/>
    </location>
</feature>
<feature type="propeptide" id="PRO_0000029040" evidence="1">
    <location>
        <begin position="16"/>
        <end position="176"/>
    </location>
</feature>
<feature type="chain" id="PRO_0000029041" description="Disintegrin and metalloproteinase domain-containing protein 2">
    <location>
        <begin position="177"/>
        <end position="735"/>
    </location>
</feature>
<feature type="topological domain" description="Extracellular" evidence="3">
    <location>
        <begin position="16"/>
        <end position="680"/>
    </location>
</feature>
<feature type="transmembrane region" description="Helical" evidence="3">
    <location>
        <begin position="681"/>
        <end position="701"/>
    </location>
</feature>
<feature type="topological domain" description="Cytoplasmic" evidence="3">
    <location>
        <begin position="702"/>
        <end position="735"/>
    </location>
</feature>
<feature type="domain" description="Peptidase M12B" evidence="6">
    <location>
        <begin position="178"/>
        <end position="375"/>
    </location>
</feature>
<feature type="domain" description="Disintegrin" evidence="4">
    <location>
        <begin position="384"/>
        <end position="470"/>
    </location>
</feature>
<feature type="domain" description="EGF-like" evidence="5">
    <location>
        <begin position="610"/>
        <end position="643"/>
    </location>
</feature>
<feature type="region of interest" description="Disordered" evidence="7">
    <location>
        <begin position="716"/>
        <end position="735"/>
    </location>
</feature>
<feature type="modified residue" description="Phosphoserine" evidence="2">
    <location>
        <position position="723"/>
    </location>
</feature>
<feature type="glycosylation site" description="N-linked (GlcNAc...) asparagine" evidence="3">
    <location>
        <position position="55"/>
    </location>
</feature>
<feature type="glycosylation site" description="N-linked (GlcNAc...) asparagine" evidence="3">
    <location>
        <position position="220"/>
    </location>
</feature>
<feature type="glycosylation site" description="N-linked (GlcNAc...) asparagine" evidence="3">
    <location>
        <position position="288"/>
    </location>
</feature>
<feature type="glycosylation site" description="N-linked (GlcNAc...) asparagine" evidence="3">
    <location>
        <position position="353"/>
    </location>
</feature>
<feature type="glycosylation site" description="N-linked (GlcNAc...) asparagine" evidence="3">
    <location>
        <position position="456"/>
    </location>
</feature>
<feature type="glycosylation site" description="N-linked (GlcNAc...) asparagine" evidence="3">
    <location>
        <position position="564"/>
    </location>
</feature>
<feature type="disulfide bond" evidence="1">
    <location>
        <begin position="287"/>
        <end position="370"/>
    </location>
</feature>
<feature type="disulfide bond" evidence="1">
    <location>
        <begin position="329"/>
        <end position="354"/>
    </location>
</feature>
<feature type="disulfide bond" evidence="1">
    <location>
        <begin position="331"/>
        <end position="336"/>
    </location>
</feature>
<feature type="disulfide bond" evidence="3">
    <location>
        <begin position="442"/>
        <end position="455"/>
    </location>
</feature>
<feature type="disulfide bond" evidence="1">
    <location>
        <begin position="614"/>
        <end position="625"/>
    </location>
</feature>
<feature type="disulfide bond" evidence="1">
    <location>
        <begin position="619"/>
        <end position="631"/>
    </location>
</feature>
<feature type="disulfide bond" evidence="1">
    <location>
        <begin position="633"/>
        <end position="642"/>
    </location>
</feature>
<evidence type="ECO:0000250" key="1"/>
<evidence type="ECO:0000250" key="2">
    <source>
        <dbReference type="UniProtKB" id="Q60718"/>
    </source>
</evidence>
<evidence type="ECO:0000255" key="3"/>
<evidence type="ECO:0000255" key="4">
    <source>
        <dbReference type="PROSITE-ProRule" id="PRU00068"/>
    </source>
</evidence>
<evidence type="ECO:0000255" key="5">
    <source>
        <dbReference type="PROSITE-ProRule" id="PRU00076"/>
    </source>
</evidence>
<evidence type="ECO:0000255" key="6">
    <source>
        <dbReference type="PROSITE-ProRule" id="PRU00276"/>
    </source>
</evidence>
<evidence type="ECO:0000256" key="7">
    <source>
        <dbReference type="SAM" id="MobiDB-lite"/>
    </source>
</evidence>
<dbReference type="EMBL" id="Z11720">
    <property type="protein sequence ID" value="CAA77784.1"/>
    <property type="molecule type" value="mRNA"/>
</dbReference>
<dbReference type="PIR" id="S23403">
    <property type="entry name" value="S23403"/>
</dbReference>
<dbReference type="RefSeq" id="NP_001166381.1">
    <property type="nucleotide sequence ID" value="NM_001172910.1"/>
</dbReference>
<dbReference type="SMR" id="Q60411"/>
<dbReference type="FunCoup" id="Q60411">
    <property type="interactions" value="12"/>
</dbReference>
<dbReference type="STRING" id="10141.ENSCPOP00000017917"/>
<dbReference type="MEROPS" id="M12.950"/>
<dbReference type="GlyCosmos" id="Q60411">
    <property type="glycosylation" value="6 sites, No reported glycans"/>
</dbReference>
<dbReference type="GeneID" id="100135471"/>
<dbReference type="KEGG" id="cpoc:100135471"/>
<dbReference type="CTD" id="2515"/>
<dbReference type="eggNOG" id="KOG3607">
    <property type="taxonomic scope" value="Eukaryota"/>
</dbReference>
<dbReference type="InParanoid" id="Q60411"/>
<dbReference type="OrthoDB" id="5951731at2759"/>
<dbReference type="Proteomes" id="UP000005447">
    <property type="component" value="Unassembled WGS sequence"/>
</dbReference>
<dbReference type="GO" id="GO:0005886">
    <property type="term" value="C:plasma membrane"/>
    <property type="evidence" value="ECO:0007669"/>
    <property type="project" value="TreeGrafter"/>
</dbReference>
<dbReference type="GO" id="GO:0004222">
    <property type="term" value="F:metalloendopeptidase activity"/>
    <property type="evidence" value="ECO:0007669"/>
    <property type="project" value="InterPro"/>
</dbReference>
<dbReference type="GO" id="GO:0007339">
    <property type="term" value="P:binding of sperm to zona pellucida"/>
    <property type="evidence" value="ECO:0007669"/>
    <property type="project" value="TreeGrafter"/>
</dbReference>
<dbReference type="GO" id="GO:0007155">
    <property type="term" value="P:cell adhesion"/>
    <property type="evidence" value="ECO:0007669"/>
    <property type="project" value="UniProtKB-KW"/>
</dbReference>
<dbReference type="GO" id="GO:0008584">
    <property type="term" value="P:male gonad development"/>
    <property type="evidence" value="ECO:0007669"/>
    <property type="project" value="TreeGrafter"/>
</dbReference>
<dbReference type="GO" id="GO:0006508">
    <property type="term" value="P:proteolysis"/>
    <property type="evidence" value="ECO:0007669"/>
    <property type="project" value="InterPro"/>
</dbReference>
<dbReference type="CDD" id="cd04269">
    <property type="entry name" value="ZnMc_adamalysin_II_like"/>
    <property type="match status" value="1"/>
</dbReference>
<dbReference type="FunFam" id="4.10.70.10:FF:000001">
    <property type="entry name" value="Disintegrin and metalloproteinase domain-containing protein 22"/>
    <property type="match status" value="1"/>
</dbReference>
<dbReference type="Gene3D" id="3.40.390.10">
    <property type="entry name" value="Collagenase (Catalytic Domain)"/>
    <property type="match status" value="1"/>
</dbReference>
<dbReference type="Gene3D" id="4.10.70.10">
    <property type="entry name" value="Disintegrin domain"/>
    <property type="match status" value="1"/>
</dbReference>
<dbReference type="InterPro" id="IPR006586">
    <property type="entry name" value="ADAM_Cys-rich"/>
</dbReference>
<dbReference type="InterPro" id="IPR018358">
    <property type="entry name" value="Disintegrin_CS"/>
</dbReference>
<dbReference type="InterPro" id="IPR001762">
    <property type="entry name" value="Disintegrin_dom"/>
</dbReference>
<dbReference type="InterPro" id="IPR036436">
    <property type="entry name" value="Disintegrin_dom_sf"/>
</dbReference>
<dbReference type="InterPro" id="IPR000742">
    <property type="entry name" value="EGF-like_dom"/>
</dbReference>
<dbReference type="InterPro" id="IPR024079">
    <property type="entry name" value="MetalloPept_cat_dom_sf"/>
</dbReference>
<dbReference type="InterPro" id="IPR001590">
    <property type="entry name" value="Peptidase_M12B"/>
</dbReference>
<dbReference type="InterPro" id="IPR002870">
    <property type="entry name" value="Peptidase_M12B_N"/>
</dbReference>
<dbReference type="InterPro" id="IPR034027">
    <property type="entry name" value="Reprolysin_adamalysin"/>
</dbReference>
<dbReference type="PANTHER" id="PTHR11905">
    <property type="entry name" value="ADAM A DISINTEGRIN AND METALLOPROTEASE DOMAIN"/>
    <property type="match status" value="1"/>
</dbReference>
<dbReference type="PANTHER" id="PTHR11905:SF108">
    <property type="entry name" value="DISINTEGRIN AND METALLOPROTEINASE DOMAIN-CONTAINING PROTEIN 2"/>
    <property type="match status" value="1"/>
</dbReference>
<dbReference type="Pfam" id="PF08516">
    <property type="entry name" value="ADAM_CR"/>
    <property type="match status" value="1"/>
</dbReference>
<dbReference type="Pfam" id="PF00200">
    <property type="entry name" value="Disintegrin"/>
    <property type="match status" value="1"/>
</dbReference>
<dbReference type="Pfam" id="PF01562">
    <property type="entry name" value="Pep_M12B_propep"/>
    <property type="match status" value="1"/>
</dbReference>
<dbReference type="Pfam" id="PF01421">
    <property type="entry name" value="Reprolysin"/>
    <property type="match status" value="1"/>
</dbReference>
<dbReference type="PRINTS" id="PR00289">
    <property type="entry name" value="DISINTEGRIN"/>
</dbReference>
<dbReference type="SMART" id="SM00608">
    <property type="entry name" value="ACR"/>
    <property type="match status" value="1"/>
</dbReference>
<dbReference type="SMART" id="SM00050">
    <property type="entry name" value="DISIN"/>
    <property type="match status" value="1"/>
</dbReference>
<dbReference type="SUPFAM" id="SSF57552">
    <property type="entry name" value="Blood coagulation inhibitor (disintegrin)"/>
    <property type="match status" value="1"/>
</dbReference>
<dbReference type="SUPFAM" id="SSF55486">
    <property type="entry name" value="Metalloproteases ('zincins'), catalytic domain"/>
    <property type="match status" value="1"/>
</dbReference>
<dbReference type="PROSITE" id="PS50215">
    <property type="entry name" value="ADAM_MEPRO"/>
    <property type="match status" value="1"/>
</dbReference>
<dbReference type="PROSITE" id="PS00427">
    <property type="entry name" value="DISINTEGRIN_1"/>
    <property type="match status" value="1"/>
</dbReference>
<dbReference type="PROSITE" id="PS50214">
    <property type="entry name" value="DISINTEGRIN_2"/>
    <property type="match status" value="1"/>
</dbReference>
<dbReference type="PROSITE" id="PS50026">
    <property type="entry name" value="EGF_3"/>
    <property type="match status" value="1"/>
</dbReference>
<organism>
    <name type="scientific">Cavia porcellus</name>
    <name type="common">Guinea pig</name>
    <dbReference type="NCBI Taxonomy" id="10141"/>
    <lineage>
        <taxon>Eukaryota</taxon>
        <taxon>Metazoa</taxon>
        <taxon>Chordata</taxon>
        <taxon>Craniata</taxon>
        <taxon>Vertebrata</taxon>
        <taxon>Euteleostomi</taxon>
        <taxon>Mammalia</taxon>
        <taxon>Eutheria</taxon>
        <taxon>Euarchontoglires</taxon>
        <taxon>Glires</taxon>
        <taxon>Rodentia</taxon>
        <taxon>Hystricomorpha</taxon>
        <taxon>Caviidae</taxon>
        <taxon>Cavia</taxon>
    </lineage>
</organism>
<name>ADAM2_CAVPO</name>
<proteinExistence type="evidence at transcript level"/>
<sequence>MLCLLLLLCGLASLGGPLKKYVENSGMQITVPEKIRSVKRGSVESEVSYKIVIENTTYIVNLVRKMFLPHDFQVYSYDSAGIMKPFEDYSQNFCYYQGHIEGFPTSLASISTCAGLRGLLQFETVSYGIEPLKSSIGFEHVIYPVKHDNEKSQYLKKSINVKNVVYKIKSIKSSVRTHYIEMHIIVEKNLYKHMGGNTATVTEKIFQLVGLMNAFFSTLNLTVILASLELWIDENKIPTTGDVNELLHAFQKWKKSYLVLRPHDVAFLLVYRESPSYIGAIFQGMICNTSYGGGIALHSKTITLDSFGVILVQLLSVSMGIAYDNADLCRCRGAICLMSPEAVFSSGMKMFSNCSVKAFKLFTSSQVSQCLQNQPYLEPVYRSNPVCGNNRVEQGEDCDCGSQEECQDTCCDAATCRLKSTSRCAQGPCCNQCEFKTKGEVCRESTDECDLPEYCNGSSGACQEDLYVINGHRCANEEWICMNGRCLSGKAQVQETFGTEMEMGSVDCFEQLNTKNDITGNCGILSPGNYKACGASNWKCGKLICSYDKSEILRNKEGMTIYANISGHICVSIEYPPGHAKSALMWVRDGTVCGPSEVCRQQQCVSSSYLGYDCTPATCSDHGVCNNKRHCHCNPTYVPPNCETQDSTKPGGSVDSGNLRYEPIPETYFVEGAYHTKSRKWPFFLIIPFFVIFSVLVATVVKVYYQKKKWKTEDYANDENIESESEPKSSKVSSK</sequence>
<reference key="1">
    <citation type="journal article" date="1993" name="Proc. Natl. Acad. Sci. U.S.A.">
        <title>The precursor region of a protein active in sperm-egg fusion contains a metalloprotease and a disintegrin domain: structural, functional, and evolutionary implications.</title>
        <authorList>
            <person name="Wolfsberg T.G."/>
            <person name="Bazan J.F."/>
            <person name="Blobel C.P."/>
            <person name="Myles D.G."/>
            <person name="Primakoff P."/>
            <person name="White J.M."/>
        </authorList>
    </citation>
    <scope>NUCLEOTIDE SEQUENCE [MRNA]</scope>
    <source>
        <tissue>Testis</tissue>
    </source>
</reference>
<reference key="2">
    <citation type="journal article" date="1992" name="Nature">
        <title>A potential fusion peptide and an integrin ligand domain in a protein active in sperm-egg fusion.</title>
        <authorList>
            <person name="Blobel C.P."/>
            <person name="Wolfsberg T.G."/>
            <person name="Turck C.W."/>
            <person name="Myles D.G."/>
            <person name="Primakoff P."/>
            <person name="White J.M."/>
        </authorList>
    </citation>
    <scope>NUCLEOTIDE SEQUENCE [MRNA] OF 383-735</scope>
    <source>
        <tissue>Testis</tissue>
    </source>
</reference>
<protein>
    <recommendedName>
        <fullName>Disintegrin and metalloproteinase domain-containing protein 2</fullName>
        <shortName>ADAM 2</shortName>
    </recommendedName>
    <alternativeName>
        <fullName>Fertilin subunit beta</fullName>
    </alternativeName>
    <alternativeName>
        <fullName>PH-30</fullName>
        <shortName>PH30</shortName>
    </alternativeName>
    <alternativeName>
        <fullName>PH30-beta</fullName>
    </alternativeName>
</protein>